<keyword id="KW-0028">Amino-acid biosynthesis</keyword>
<keyword id="KW-0057">Aromatic amino acid biosynthesis</keyword>
<keyword id="KW-0521">NADP</keyword>
<keyword id="KW-0560">Oxidoreductase</keyword>
<keyword id="KW-1185">Reference proteome</keyword>
<protein>
    <recommendedName>
        <fullName evidence="1">Shikimate dehydrogenase (NADP(+))</fullName>
        <shortName evidence="1">SDH</shortName>
        <ecNumber evidence="1">1.1.1.25</ecNumber>
    </recommendedName>
</protein>
<sequence length="280" mass="30608">MKKLYGVIGNPIGHSMSPDIHNASLKDLGLDGHYHAFKVEENDLEDAVKGIRALGVQGINVTVPHKVSIMDYLDHIDESAKVLGAVNTVRREGDKLVGYNTDGEGFVKSLMKVLDKPISELSFLMIGAGGAARAIFTTIVRNTPKKFDICNRTLEKAKRLTEATPSFHNKEVLSIKEAEERLEQYDVIIHTTSVGMYPNVDDVPLSLQRAASSAVVCDIVYNPIQTALLKEASQKGLKTLDGVGMFVEQAALSFQLWTGQEPNIEKMRSIVIGKLGGTEC</sequence>
<feature type="chain" id="PRO_0000135992" description="Shikimate dehydrogenase (NADP(+))">
    <location>
        <begin position="1"/>
        <end position="280"/>
    </location>
</feature>
<feature type="active site" description="Proton acceptor" evidence="1">
    <location>
        <position position="66"/>
    </location>
</feature>
<feature type="binding site" evidence="1">
    <location>
        <begin position="15"/>
        <end position="17"/>
    </location>
    <ligand>
        <name>shikimate</name>
        <dbReference type="ChEBI" id="CHEBI:36208"/>
    </ligand>
</feature>
<feature type="binding site" evidence="1">
    <location>
        <position position="62"/>
    </location>
    <ligand>
        <name>shikimate</name>
        <dbReference type="ChEBI" id="CHEBI:36208"/>
    </ligand>
</feature>
<feature type="binding site" evidence="1">
    <location>
        <position position="78"/>
    </location>
    <ligand>
        <name>NADP(+)</name>
        <dbReference type="ChEBI" id="CHEBI:58349"/>
    </ligand>
</feature>
<feature type="binding site" evidence="1">
    <location>
        <position position="87"/>
    </location>
    <ligand>
        <name>shikimate</name>
        <dbReference type="ChEBI" id="CHEBI:36208"/>
    </ligand>
</feature>
<feature type="binding site" evidence="1">
    <location>
        <position position="102"/>
    </location>
    <ligand>
        <name>shikimate</name>
        <dbReference type="ChEBI" id="CHEBI:36208"/>
    </ligand>
</feature>
<feature type="binding site" evidence="1">
    <location>
        <begin position="127"/>
        <end position="131"/>
    </location>
    <ligand>
        <name>NADP(+)</name>
        <dbReference type="ChEBI" id="CHEBI:58349"/>
    </ligand>
</feature>
<feature type="binding site" evidence="1">
    <location>
        <begin position="151"/>
        <end position="156"/>
    </location>
    <ligand>
        <name>NADP(+)</name>
        <dbReference type="ChEBI" id="CHEBI:58349"/>
    </ligand>
</feature>
<feature type="binding site" evidence="1">
    <location>
        <position position="219"/>
    </location>
    <ligand>
        <name>NADP(+)</name>
        <dbReference type="ChEBI" id="CHEBI:58349"/>
    </ligand>
</feature>
<feature type="binding site" evidence="1">
    <location>
        <position position="221"/>
    </location>
    <ligand>
        <name>shikimate</name>
        <dbReference type="ChEBI" id="CHEBI:36208"/>
    </ligand>
</feature>
<feature type="binding site" evidence="1">
    <location>
        <position position="242"/>
    </location>
    <ligand>
        <name>NADP(+)</name>
        <dbReference type="ChEBI" id="CHEBI:58349"/>
    </ligand>
</feature>
<feature type="sequence conflict" description="In Ref. 1; BAA12445." evidence="2" ref="1">
    <original>I</original>
    <variation>F</variation>
    <location>
        <position position="139"/>
    </location>
</feature>
<gene>
    <name evidence="1" type="primary">aroE</name>
    <name type="synonym">aroD</name>
    <name type="ordered locus">BSU25660</name>
</gene>
<accession>P54374</accession>
<name>AROE_BACSU</name>
<organism>
    <name type="scientific">Bacillus subtilis (strain 168)</name>
    <dbReference type="NCBI Taxonomy" id="224308"/>
    <lineage>
        <taxon>Bacteria</taxon>
        <taxon>Bacillati</taxon>
        <taxon>Bacillota</taxon>
        <taxon>Bacilli</taxon>
        <taxon>Bacillales</taxon>
        <taxon>Bacillaceae</taxon>
        <taxon>Bacillus</taxon>
    </lineage>
</organism>
<dbReference type="EC" id="1.1.1.25" evidence="1"/>
<dbReference type="EMBL" id="D84432">
    <property type="protein sequence ID" value="BAA12445.1"/>
    <property type="molecule type" value="Genomic_DNA"/>
</dbReference>
<dbReference type="EMBL" id="AL009126">
    <property type="protein sequence ID" value="CAB14508.2"/>
    <property type="molecule type" value="Genomic_DNA"/>
</dbReference>
<dbReference type="PIR" id="A69590">
    <property type="entry name" value="A69590"/>
</dbReference>
<dbReference type="RefSeq" id="NP_390444.2">
    <property type="nucleotide sequence ID" value="NC_000964.3"/>
</dbReference>
<dbReference type="RefSeq" id="WP_003229967.1">
    <property type="nucleotide sequence ID" value="NZ_OZ025638.1"/>
</dbReference>
<dbReference type="SMR" id="P54374"/>
<dbReference type="FunCoup" id="P54374">
    <property type="interactions" value="552"/>
</dbReference>
<dbReference type="STRING" id="224308.BSU25660"/>
<dbReference type="PaxDb" id="224308-BSU25660"/>
<dbReference type="EnsemblBacteria" id="CAB14508">
    <property type="protein sequence ID" value="CAB14508"/>
    <property type="gene ID" value="BSU_25660"/>
</dbReference>
<dbReference type="GeneID" id="937820"/>
<dbReference type="KEGG" id="bsu:BSU25660"/>
<dbReference type="PATRIC" id="fig|224308.179.peg.2789"/>
<dbReference type="eggNOG" id="COG0169">
    <property type="taxonomic scope" value="Bacteria"/>
</dbReference>
<dbReference type="InParanoid" id="P54374"/>
<dbReference type="OrthoDB" id="9792692at2"/>
<dbReference type="PhylomeDB" id="P54374"/>
<dbReference type="BioCyc" id="BSUB:BSU25660-MONOMER"/>
<dbReference type="BioCyc" id="MetaCyc:ARODBACSU-MONOMER"/>
<dbReference type="UniPathway" id="UPA00053">
    <property type="reaction ID" value="UER00087"/>
</dbReference>
<dbReference type="Proteomes" id="UP000001570">
    <property type="component" value="Chromosome"/>
</dbReference>
<dbReference type="GO" id="GO:0005829">
    <property type="term" value="C:cytosol"/>
    <property type="evidence" value="ECO:0000318"/>
    <property type="project" value="GO_Central"/>
</dbReference>
<dbReference type="GO" id="GO:0050661">
    <property type="term" value="F:NADP binding"/>
    <property type="evidence" value="ECO:0000318"/>
    <property type="project" value="GO_Central"/>
</dbReference>
<dbReference type="GO" id="GO:0004764">
    <property type="term" value="F:shikimate 3-dehydrogenase (NADP+) activity"/>
    <property type="evidence" value="ECO:0000318"/>
    <property type="project" value="GO_Central"/>
</dbReference>
<dbReference type="GO" id="GO:0008652">
    <property type="term" value="P:amino acid biosynthetic process"/>
    <property type="evidence" value="ECO:0007669"/>
    <property type="project" value="UniProtKB-KW"/>
</dbReference>
<dbReference type="GO" id="GO:0009073">
    <property type="term" value="P:aromatic amino acid family biosynthetic process"/>
    <property type="evidence" value="ECO:0007669"/>
    <property type="project" value="UniProtKB-KW"/>
</dbReference>
<dbReference type="GO" id="GO:0009423">
    <property type="term" value="P:chorismate biosynthetic process"/>
    <property type="evidence" value="ECO:0000318"/>
    <property type="project" value="GO_Central"/>
</dbReference>
<dbReference type="GO" id="GO:0019632">
    <property type="term" value="P:shikimate metabolic process"/>
    <property type="evidence" value="ECO:0000318"/>
    <property type="project" value="GO_Central"/>
</dbReference>
<dbReference type="CDD" id="cd01065">
    <property type="entry name" value="NAD_bind_Shikimate_DH"/>
    <property type="match status" value="1"/>
</dbReference>
<dbReference type="Gene3D" id="3.40.50.10860">
    <property type="entry name" value="Leucine Dehydrogenase, chain A, domain 1"/>
    <property type="match status" value="1"/>
</dbReference>
<dbReference type="Gene3D" id="3.40.50.720">
    <property type="entry name" value="NAD(P)-binding Rossmann-like Domain"/>
    <property type="match status" value="1"/>
</dbReference>
<dbReference type="HAMAP" id="MF_00222">
    <property type="entry name" value="Shikimate_DH_AroE"/>
    <property type="match status" value="1"/>
</dbReference>
<dbReference type="InterPro" id="IPR046346">
    <property type="entry name" value="Aminoacid_DH-like_N_sf"/>
</dbReference>
<dbReference type="InterPro" id="IPR036291">
    <property type="entry name" value="NAD(P)-bd_dom_sf"/>
</dbReference>
<dbReference type="InterPro" id="IPR041121">
    <property type="entry name" value="SDH_C"/>
</dbReference>
<dbReference type="InterPro" id="IPR011342">
    <property type="entry name" value="Shikimate_DH"/>
</dbReference>
<dbReference type="InterPro" id="IPR013708">
    <property type="entry name" value="Shikimate_DH-bd_N"/>
</dbReference>
<dbReference type="InterPro" id="IPR022893">
    <property type="entry name" value="Shikimate_DH_fam"/>
</dbReference>
<dbReference type="InterPro" id="IPR006151">
    <property type="entry name" value="Shikm_DH/Glu-tRNA_Rdtase"/>
</dbReference>
<dbReference type="NCBIfam" id="TIGR00507">
    <property type="entry name" value="aroE"/>
    <property type="match status" value="1"/>
</dbReference>
<dbReference type="NCBIfam" id="NF001310">
    <property type="entry name" value="PRK00258.1-2"/>
    <property type="match status" value="1"/>
</dbReference>
<dbReference type="NCBIfam" id="NF001319">
    <property type="entry name" value="PRK00258.3-3"/>
    <property type="match status" value="1"/>
</dbReference>
<dbReference type="PANTHER" id="PTHR21089:SF1">
    <property type="entry name" value="BIFUNCTIONAL 3-DEHYDROQUINATE DEHYDRATASE_SHIKIMATE DEHYDROGENASE, CHLOROPLASTIC"/>
    <property type="match status" value="1"/>
</dbReference>
<dbReference type="PANTHER" id="PTHR21089">
    <property type="entry name" value="SHIKIMATE DEHYDROGENASE"/>
    <property type="match status" value="1"/>
</dbReference>
<dbReference type="Pfam" id="PF18317">
    <property type="entry name" value="SDH_C"/>
    <property type="match status" value="1"/>
</dbReference>
<dbReference type="Pfam" id="PF01488">
    <property type="entry name" value="Shikimate_DH"/>
    <property type="match status" value="1"/>
</dbReference>
<dbReference type="Pfam" id="PF08501">
    <property type="entry name" value="Shikimate_dh_N"/>
    <property type="match status" value="1"/>
</dbReference>
<dbReference type="SUPFAM" id="SSF53223">
    <property type="entry name" value="Aminoacid dehydrogenase-like, N-terminal domain"/>
    <property type="match status" value="1"/>
</dbReference>
<dbReference type="SUPFAM" id="SSF51735">
    <property type="entry name" value="NAD(P)-binding Rossmann-fold domains"/>
    <property type="match status" value="1"/>
</dbReference>
<comment type="function">
    <text evidence="1">Involved in the biosynthesis of the chorismate, which leads to the biosynthesis of aromatic amino acids. Catalyzes the reversible NADPH linked reduction of 3-dehydroshikimate (DHSA) to yield shikimate (SA).</text>
</comment>
<comment type="catalytic activity">
    <reaction evidence="1">
        <text>shikimate + NADP(+) = 3-dehydroshikimate + NADPH + H(+)</text>
        <dbReference type="Rhea" id="RHEA:17737"/>
        <dbReference type="ChEBI" id="CHEBI:15378"/>
        <dbReference type="ChEBI" id="CHEBI:16630"/>
        <dbReference type="ChEBI" id="CHEBI:36208"/>
        <dbReference type="ChEBI" id="CHEBI:57783"/>
        <dbReference type="ChEBI" id="CHEBI:58349"/>
        <dbReference type="EC" id="1.1.1.25"/>
    </reaction>
</comment>
<comment type="pathway">
    <text evidence="1">Metabolic intermediate biosynthesis; chorismate biosynthesis; chorismate from D-erythrose 4-phosphate and phosphoenolpyruvate: step 4/7.</text>
</comment>
<comment type="subunit">
    <text evidence="1">Homodimer.</text>
</comment>
<comment type="similarity">
    <text evidence="1">Belongs to the shikimate dehydrogenase family.</text>
</comment>
<proteinExistence type="inferred from homology"/>
<evidence type="ECO:0000255" key="1">
    <source>
        <dbReference type="HAMAP-Rule" id="MF_00222"/>
    </source>
</evidence>
<evidence type="ECO:0000305" key="2"/>
<reference key="1">
    <citation type="journal article" date="1996" name="Microbiology">
        <title>Systematic sequencing of the 283 kb 210 degrees-232 degrees region of the Bacillus subtilis genome containing the skin element and many sporulation genes.</title>
        <authorList>
            <person name="Mizuno M."/>
            <person name="Masuda S."/>
            <person name="Takemaru K."/>
            <person name="Hosono S."/>
            <person name="Sato T."/>
            <person name="Takeuchi M."/>
            <person name="Kobayashi Y."/>
        </authorList>
    </citation>
    <scope>NUCLEOTIDE SEQUENCE [GENOMIC DNA]</scope>
    <source>
        <strain>168 / JH642</strain>
    </source>
</reference>
<reference key="2">
    <citation type="journal article" date="1997" name="Nature">
        <title>The complete genome sequence of the Gram-positive bacterium Bacillus subtilis.</title>
        <authorList>
            <person name="Kunst F."/>
            <person name="Ogasawara N."/>
            <person name="Moszer I."/>
            <person name="Albertini A.M."/>
            <person name="Alloni G."/>
            <person name="Azevedo V."/>
            <person name="Bertero M.G."/>
            <person name="Bessieres P."/>
            <person name="Bolotin A."/>
            <person name="Borchert S."/>
            <person name="Borriss R."/>
            <person name="Boursier L."/>
            <person name="Brans A."/>
            <person name="Braun M."/>
            <person name="Brignell S.C."/>
            <person name="Bron S."/>
            <person name="Brouillet S."/>
            <person name="Bruschi C.V."/>
            <person name="Caldwell B."/>
            <person name="Capuano V."/>
            <person name="Carter N.M."/>
            <person name="Choi S.-K."/>
            <person name="Codani J.-J."/>
            <person name="Connerton I.F."/>
            <person name="Cummings N.J."/>
            <person name="Daniel R.A."/>
            <person name="Denizot F."/>
            <person name="Devine K.M."/>
            <person name="Duesterhoeft A."/>
            <person name="Ehrlich S.D."/>
            <person name="Emmerson P.T."/>
            <person name="Entian K.-D."/>
            <person name="Errington J."/>
            <person name="Fabret C."/>
            <person name="Ferrari E."/>
            <person name="Foulger D."/>
            <person name="Fritz C."/>
            <person name="Fujita M."/>
            <person name="Fujita Y."/>
            <person name="Fuma S."/>
            <person name="Galizzi A."/>
            <person name="Galleron N."/>
            <person name="Ghim S.-Y."/>
            <person name="Glaser P."/>
            <person name="Goffeau A."/>
            <person name="Golightly E.J."/>
            <person name="Grandi G."/>
            <person name="Guiseppi G."/>
            <person name="Guy B.J."/>
            <person name="Haga K."/>
            <person name="Haiech J."/>
            <person name="Harwood C.R."/>
            <person name="Henaut A."/>
            <person name="Hilbert H."/>
            <person name="Holsappel S."/>
            <person name="Hosono S."/>
            <person name="Hullo M.-F."/>
            <person name="Itaya M."/>
            <person name="Jones L.-M."/>
            <person name="Joris B."/>
            <person name="Karamata D."/>
            <person name="Kasahara Y."/>
            <person name="Klaerr-Blanchard M."/>
            <person name="Klein C."/>
            <person name="Kobayashi Y."/>
            <person name="Koetter P."/>
            <person name="Koningstein G."/>
            <person name="Krogh S."/>
            <person name="Kumano M."/>
            <person name="Kurita K."/>
            <person name="Lapidus A."/>
            <person name="Lardinois S."/>
            <person name="Lauber J."/>
            <person name="Lazarevic V."/>
            <person name="Lee S.-M."/>
            <person name="Levine A."/>
            <person name="Liu H."/>
            <person name="Masuda S."/>
            <person name="Mauel C."/>
            <person name="Medigue C."/>
            <person name="Medina N."/>
            <person name="Mellado R.P."/>
            <person name="Mizuno M."/>
            <person name="Moestl D."/>
            <person name="Nakai S."/>
            <person name="Noback M."/>
            <person name="Noone D."/>
            <person name="O'Reilly M."/>
            <person name="Ogawa K."/>
            <person name="Ogiwara A."/>
            <person name="Oudega B."/>
            <person name="Park S.-H."/>
            <person name="Parro V."/>
            <person name="Pohl T.M."/>
            <person name="Portetelle D."/>
            <person name="Porwollik S."/>
            <person name="Prescott A.M."/>
            <person name="Presecan E."/>
            <person name="Pujic P."/>
            <person name="Purnelle B."/>
            <person name="Rapoport G."/>
            <person name="Rey M."/>
            <person name="Reynolds S."/>
            <person name="Rieger M."/>
            <person name="Rivolta C."/>
            <person name="Rocha E."/>
            <person name="Roche B."/>
            <person name="Rose M."/>
            <person name="Sadaie Y."/>
            <person name="Sato T."/>
            <person name="Scanlan E."/>
            <person name="Schleich S."/>
            <person name="Schroeter R."/>
            <person name="Scoffone F."/>
            <person name="Sekiguchi J."/>
            <person name="Sekowska A."/>
            <person name="Seror S.J."/>
            <person name="Serror P."/>
            <person name="Shin B.-S."/>
            <person name="Soldo B."/>
            <person name="Sorokin A."/>
            <person name="Tacconi E."/>
            <person name="Takagi T."/>
            <person name="Takahashi H."/>
            <person name="Takemaru K."/>
            <person name="Takeuchi M."/>
            <person name="Tamakoshi A."/>
            <person name="Tanaka T."/>
            <person name="Terpstra P."/>
            <person name="Tognoni A."/>
            <person name="Tosato V."/>
            <person name="Uchiyama S."/>
            <person name="Vandenbol M."/>
            <person name="Vannier F."/>
            <person name="Vassarotti A."/>
            <person name="Viari A."/>
            <person name="Wambutt R."/>
            <person name="Wedler E."/>
            <person name="Wedler H."/>
            <person name="Weitzenegger T."/>
            <person name="Winters P."/>
            <person name="Wipat A."/>
            <person name="Yamamoto H."/>
            <person name="Yamane K."/>
            <person name="Yasumoto K."/>
            <person name="Yata K."/>
            <person name="Yoshida K."/>
            <person name="Yoshikawa H.-F."/>
            <person name="Zumstein E."/>
            <person name="Yoshikawa H."/>
            <person name="Danchin A."/>
        </authorList>
    </citation>
    <scope>NUCLEOTIDE SEQUENCE [LARGE SCALE GENOMIC DNA]</scope>
    <source>
        <strain>168</strain>
    </source>
</reference>
<reference key="3">
    <citation type="journal article" date="2009" name="Microbiology">
        <title>From a consortium sequence to a unified sequence: the Bacillus subtilis 168 reference genome a decade later.</title>
        <authorList>
            <person name="Barbe V."/>
            <person name="Cruveiller S."/>
            <person name="Kunst F."/>
            <person name="Lenoble P."/>
            <person name="Meurice G."/>
            <person name="Sekowska A."/>
            <person name="Vallenet D."/>
            <person name="Wang T."/>
            <person name="Moszer I."/>
            <person name="Medigue C."/>
            <person name="Danchin A."/>
        </authorList>
    </citation>
    <scope>SEQUENCE REVISION TO 139</scope>
</reference>